<comment type="function">
    <text evidence="1">Component of the acetyl coenzyme A carboxylase (ACC) complex. First, biotin carboxylase catalyzes the carboxylation of biotin on its carrier protein (BCCP) and then the CO(2) group is transferred by the carboxyltransferase to acetyl-CoA to form malonyl-CoA.</text>
</comment>
<comment type="catalytic activity">
    <reaction evidence="1">
        <text>N(6)-carboxybiotinyl-L-lysyl-[protein] + acetyl-CoA = N(6)-biotinyl-L-lysyl-[protein] + malonyl-CoA</text>
        <dbReference type="Rhea" id="RHEA:54728"/>
        <dbReference type="Rhea" id="RHEA-COMP:10505"/>
        <dbReference type="Rhea" id="RHEA-COMP:10506"/>
        <dbReference type="ChEBI" id="CHEBI:57288"/>
        <dbReference type="ChEBI" id="CHEBI:57384"/>
        <dbReference type="ChEBI" id="CHEBI:83144"/>
        <dbReference type="ChEBI" id="CHEBI:83145"/>
        <dbReference type="EC" id="2.1.3.15"/>
    </reaction>
</comment>
<comment type="pathway">
    <text evidence="1">Lipid metabolism; malonyl-CoA biosynthesis; malonyl-CoA from acetyl-CoA: step 1/1.</text>
</comment>
<comment type="subunit">
    <text evidence="1">Acetyl-CoA carboxylase is a heterohexamer composed of biotin carboxyl carrier protein (AccB), biotin carboxylase (AccC) and two subunits each of ACCase subunit alpha (AccA) and ACCase subunit beta (AccD).</text>
</comment>
<comment type="subcellular location">
    <subcellularLocation>
        <location evidence="1">Cytoplasm</location>
    </subcellularLocation>
</comment>
<comment type="similarity">
    <text evidence="1">Belongs to the AccA family.</text>
</comment>
<name>ACCA_HALHL</name>
<gene>
    <name evidence="1" type="primary">accA</name>
    <name type="ordered locus">Hhal_1443</name>
</gene>
<dbReference type="EC" id="2.1.3.15" evidence="1"/>
<dbReference type="EMBL" id="CP000544">
    <property type="protein sequence ID" value="ABM62210.1"/>
    <property type="molecule type" value="Genomic_DNA"/>
</dbReference>
<dbReference type="RefSeq" id="WP_011814232.1">
    <property type="nucleotide sequence ID" value="NC_008789.1"/>
</dbReference>
<dbReference type="SMR" id="A1WWZ8"/>
<dbReference type="STRING" id="349124.Hhal_1443"/>
<dbReference type="KEGG" id="hha:Hhal_1443"/>
<dbReference type="eggNOG" id="COG0825">
    <property type="taxonomic scope" value="Bacteria"/>
</dbReference>
<dbReference type="HOGENOM" id="CLU_015486_0_2_6"/>
<dbReference type="OrthoDB" id="9808023at2"/>
<dbReference type="UniPathway" id="UPA00655">
    <property type="reaction ID" value="UER00711"/>
</dbReference>
<dbReference type="Proteomes" id="UP000000647">
    <property type="component" value="Chromosome"/>
</dbReference>
<dbReference type="GO" id="GO:0009317">
    <property type="term" value="C:acetyl-CoA carboxylase complex"/>
    <property type="evidence" value="ECO:0007669"/>
    <property type="project" value="InterPro"/>
</dbReference>
<dbReference type="GO" id="GO:0003989">
    <property type="term" value="F:acetyl-CoA carboxylase activity"/>
    <property type="evidence" value="ECO:0007669"/>
    <property type="project" value="InterPro"/>
</dbReference>
<dbReference type="GO" id="GO:0005524">
    <property type="term" value="F:ATP binding"/>
    <property type="evidence" value="ECO:0007669"/>
    <property type="project" value="UniProtKB-KW"/>
</dbReference>
<dbReference type="GO" id="GO:0016743">
    <property type="term" value="F:carboxyl- or carbamoyltransferase activity"/>
    <property type="evidence" value="ECO:0007669"/>
    <property type="project" value="UniProtKB-UniRule"/>
</dbReference>
<dbReference type="GO" id="GO:0006633">
    <property type="term" value="P:fatty acid biosynthetic process"/>
    <property type="evidence" value="ECO:0007669"/>
    <property type="project" value="UniProtKB-KW"/>
</dbReference>
<dbReference type="GO" id="GO:2001295">
    <property type="term" value="P:malonyl-CoA biosynthetic process"/>
    <property type="evidence" value="ECO:0007669"/>
    <property type="project" value="UniProtKB-UniRule"/>
</dbReference>
<dbReference type="FunFam" id="3.90.226.10:FF:000008">
    <property type="entry name" value="Acetyl-coenzyme A carboxylase carboxyl transferase subunit alpha"/>
    <property type="match status" value="1"/>
</dbReference>
<dbReference type="Gene3D" id="3.90.226.10">
    <property type="entry name" value="2-enoyl-CoA Hydratase, Chain A, domain 1"/>
    <property type="match status" value="1"/>
</dbReference>
<dbReference type="HAMAP" id="MF_00823">
    <property type="entry name" value="AcetylCoA_CT_alpha"/>
    <property type="match status" value="1"/>
</dbReference>
<dbReference type="InterPro" id="IPR001095">
    <property type="entry name" value="Acetyl_CoA_COase_a_su"/>
</dbReference>
<dbReference type="InterPro" id="IPR029045">
    <property type="entry name" value="ClpP/crotonase-like_dom_sf"/>
</dbReference>
<dbReference type="InterPro" id="IPR011763">
    <property type="entry name" value="COA_CT_C"/>
</dbReference>
<dbReference type="NCBIfam" id="TIGR00513">
    <property type="entry name" value="accA"/>
    <property type="match status" value="1"/>
</dbReference>
<dbReference type="NCBIfam" id="NF041504">
    <property type="entry name" value="AccA_sub"/>
    <property type="match status" value="1"/>
</dbReference>
<dbReference type="NCBIfam" id="NF004344">
    <property type="entry name" value="PRK05724.1"/>
    <property type="match status" value="1"/>
</dbReference>
<dbReference type="PANTHER" id="PTHR42853">
    <property type="entry name" value="ACETYL-COENZYME A CARBOXYLASE CARBOXYL TRANSFERASE SUBUNIT ALPHA"/>
    <property type="match status" value="1"/>
</dbReference>
<dbReference type="PANTHER" id="PTHR42853:SF3">
    <property type="entry name" value="ACETYL-COENZYME A CARBOXYLASE CARBOXYL TRANSFERASE SUBUNIT ALPHA, CHLOROPLASTIC"/>
    <property type="match status" value="1"/>
</dbReference>
<dbReference type="Pfam" id="PF03255">
    <property type="entry name" value="ACCA"/>
    <property type="match status" value="1"/>
</dbReference>
<dbReference type="PRINTS" id="PR01069">
    <property type="entry name" value="ACCCTRFRASEA"/>
</dbReference>
<dbReference type="SUPFAM" id="SSF52096">
    <property type="entry name" value="ClpP/crotonase"/>
    <property type="match status" value="1"/>
</dbReference>
<dbReference type="PROSITE" id="PS50989">
    <property type="entry name" value="COA_CT_CTER"/>
    <property type="match status" value="1"/>
</dbReference>
<protein>
    <recommendedName>
        <fullName evidence="1">Acetyl-coenzyme A carboxylase carboxyl transferase subunit alpha</fullName>
        <shortName evidence="1">ACCase subunit alpha</shortName>
        <shortName evidence="1">Acetyl-CoA carboxylase carboxyltransferase subunit alpha</shortName>
        <ecNumber evidence="1">2.1.3.15</ecNumber>
    </recommendedName>
</protein>
<keyword id="KW-0067">ATP-binding</keyword>
<keyword id="KW-0963">Cytoplasm</keyword>
<keyword id="KW-0275">Fatty acid biosynthesis</keyword>
<keyword id="KW-0276">Fatty acid metabolism</keyword>
<keyword id="KW-0444">Lipid biosynthesis</keyword>
<keyword id="KW-0443">Lipid metabolism</keyword>
<keyword id="KW-0547">Nucleotide-binding</keyword>
<keyword id="KW-1185">Reference proteome</keyword>
<keyword id="KW-0808">Transferase</keyword>
<reference key="1">
    <citation type="submission" date="2006-12" db="EMBL/GenBank/DDBJ databases">
        <title>Complete sequence of Halorhodospira halophila SL1.</title>
        <authorList>
            <consortium name="US DOE Joint Genome Institute"/>
            <person name="Copeland A."/>
            <person name="Lucas S."/>
            <person name="Lapidus A."/>
            <person name="Barry K."/>
            <person name="Detter J.C."/>
            <person name="Glavina del Rio T."/>
            <person name="Hammon N."/>
            <person name="Israni S."/>
            <person name="Dalin E."/>
            <person name="Tice H."/>
            <person name="Pitluck S."/>
            <person name="Saunders E."/>
            <person name="Brettin T."/>
            <person name="Bruce D."/>
            <person name="Han C."/>
            <person name="Tapia R."/>
            <person name="Schmutz J."/>
            <person name="Larimer F."/>
            <person name="Land M."/>
            <person name="Hauser L."/>
            <person name="Kyrpides N."/>
            <person name="Mikhailova N."/>
            <person name="Hoff W."/>
            <person name="Richardson P."/>
        </authorList>
    </citation>
    <scope>NUCLEOTIDE SEQUENCE [LARGE SCALE GENOMIC DNA]</scope>
    <source>
        <strain>DSM 244 / SL1</strain>
    </source>
</reference>
<proteinExistence type="inferred from homology"/>
<sequence length="318" mass="35443">MTKNFLDFEQPIAELEAKIEELRNVGQDSEVNINEEIQRLEAKSRSLTEKIFSSLSAWQIVQLARHPERPYLFDYIERIFTDFQELHGDRAYADDAAIAGGVARFDGRPVMVIGQQKGRDTKEKVRRNFGMPRPEGYRKALRLMRMAERFGLPIFTFIDTPGAYPGVGAEERGQSEAIARNLAEMAQLRVPVICTVVGEGGSGGALAISVGNRLLMLRYSVYSVISPEGCASILWKSSERAADAAEAMQMAAERLHDLGIVDRVIPEPLGGAHRDYEAMAETLREALREEWARVGQMSPDELVADRHQRLAAIGQPQG</sequence>
<organism>
    <name type="scientific">Halorhodospira halophila (strain DSM 244 / SL1)</name>
    <name type="common">Ectothiorhodospira halophila (strain DSM 244 / SL1)</name>
    <dbReference type="NCBI Taxonomy" id="349124"/>
    <lineage>
        <taxon>Bacteria</taxon>
        <taxon>Pseudomonadati</taxon>
        <taxon>Pseudomonadota</taxon>
        <taxon>Gammaproteobacteria</taxon>
        <taxon>Chromatiales</taxon>
        <taxon>Ectothiorhodospiraceae</taxon>
        <taxon>Halorhodospira</taxon>
    </lineage>
</organism>
<accession>A1WWZ8</accession>
<evidence type="ECO:0000255" key="1">
    <source>
        <dbReference type="HAMAP-Rule" id="MF_00823"/>
    </source>
</evidence>
<evidence type="ECO:0000255" key="2">
    <source>
        <dbReference type="PROSITE-ProRule" id="PRU01137"/>
    </source>
</evidence>
<feature type="chain" id="PRO_1000062629" description="Acetyl-coenzyme A carboxylase carboxyl transferase subunit alpha">
    <location>
        <begin position="1"/>
        <end position="318"/>
    </location>
</feature>
<feature type="domain" description="CoA carboxyltransferase C-terminal" evidence="2">
    <location>
        <begin position="32"/>
        <end position="293"/>
    </location>
</feature>